<protein>
    <recommendedName>
        <fullName evidence="1">NH(3)-dependent NAD(+) synthetase</fullName>
        <ecNumber evidence="1">6.3.1.5</ecNumber>
    </recommendedName>
</protein>
<comment type="function">
    <text evidence="1">Catalyzes the ATP-dependent amidation of deamido-NAD to form NAD. Uses ammonia as a nitrogen source.</text>
</comment>
<comment type="catalytic activity">
    <reaction evidence="1">
        <text>deamido-NAD(+) + NH4(+) + ATP = AMP + diphosphate + NAD(+) + H(+)</text>
        <dbReference type="Rhea" id="RHEA:21188"/>
        <dbReference type="ChEBI" id="CHEBI:15378"/>
        <dbReference type="ChEBI" id="CHEBI:28938"/>
        <dbReference type="ChEBI" id="CHEBI:30616"/>
        <dbReference type="ChEBI" id="CHEBI:33019"/>
        <dbReference type="ChEBI" id="CHEBI:57540"/>
        <dbReference type="ChEBI" id="CHEBI:58437"/>
        <dbReference type="ChEBI" id="CHEBI:456215"/>
        <dbReference type="EC" id="6.3.1.5"/>
    </reaction>
</comment>
<comment type="pathway">
    <text evidence="1">Cofactor biosynthesis; NAD(+) biosynthesis; NAD(+) from deamido-NAD(+) (ammonia route): step 1/1.</text>
</comment>
<comment type="subunit">
    <text evidence="1">Homodimer.</text>
</comment>
<comment type="similarity">
    <text evidence="1">Belongs to the NAD synthetase family.</text>
</comment>
<keyword id="KW-0067">ATP-binding</keyword>
<keyword id="KW-0436">Ligase</keyword>
<keyword id="KW-0460">Magnesium</keyword>
<keyword id="KW-0479">Metal-binding</keyword>
<keyword id="KW-0520">NAD</keyword>
<keyword id="KW-0547">Nucleotide-binding</keyword>
<keyword id="KW-1185">Reference proteome</keyword>
<gene>
    <name evidence="1" type="primary">nadE</name>
    <name type="ordered locus">SERP1449</name>
</gene>
<name>NADE_STAEQ</name>
<sequence>MSRLQDVVVNEMKVKKQIDSVEEIQEIKQFIKAYVKSHSFIQTLVLGISGGQDSTLTGKLAQLAVNELKEEGRNCKFIAVKLPYGVQQDAHEVEDALEFINPDTTYTVNIKPAVDQSVQSLSEAGIKLTDFQKGNEKARERMKVQFSIASNTQGIVLGTDHSAENITGFYTKYGDGAADIAPIFGLNKRQGKQLLAYLGAPKHLYEKVPTADLEDDKPQLPDEEALGVSYHDIDDYLEGKEIPGTARETIEKHYVRNAHKRELAYTRYSWPKYNK</sequence>
<organism>
    <name type="scientific">Staphylococcus epidermidis (strain ATCC 35984 / DSM 28319 / BCRC 17069 / CCUG 31568 / BM 3577 / RP62A)</name>
    <dbReference type="NCBI Taxonomy" id="176279"/>
    <lineage>
        <taxon>Bacteria</taxon>
        <taxon>Bacillati</taxon>
        <taxon>Bacillota</taxon>
        <taxon>Bacilli</taxon>
        <taxon>Bacillales</taxon>
        <taxon>Staphylococcaceae</taxon>
        <taxon>Staphylococcus</taxon>
    </lineage>
</organism>
<accession>Q5HN23</accession>
<evidence type="ECO:0000255" key="1">
    <source>
        <dbReference type="HAMAP-Rule" id="MF_00193"/>
    </source>
</evidence>
<dbReference type="EC" id="6.3.1.5" evidence="1"/>
<dbReference type="EMBL" id="CP000029">
    <property type="protein sequence ID" value="AAW54837.1"/>
    <property type="molecule type" value="Genomic_DNA"/>
</dbReference>
<dbReference type="RefSeq" id="WP_002455874.1">
    <property type="nucleotide sequence ID" value="NC_002976.3"/>
</dbReference>
<dbReference type="SMR" id="Q5HN23"/>
<dbReference type="STRING" id="176279.SERP1449"/>
<dbReference type="KEGG" id="ser:SERP1449"/>
<dbReference type="eggNOG" id="COG0171">
    <property type="taxonomic scope" value="Bacteria"/>
</dbReference>
<dbReference type="HOGENOM" id="CLU_059327_3_0_9"/>
<dbReference type="UniPathway" id="UPA00253">
    <property type="reaction ID" value="UER00333"/>
</dbReference>
<dbReference type="Proteomes" id="UP000000531">
    <property type="component" value="Chromosome"/>
</dbReference>
<dbReference type="GO" id="GO:0005737">
    <property type="term" value="C:cytoplasm"/>
    <property type="evidence" value="ECO:0007669"/>
    <property type="project" value="InterPro"/>
</dbReference>
<dbReference type="GO" id="GO:0005524">
    <property type="term" value="F:ATP binding"/>
    <property type="evidence" value="ECO:0007669"/>
    <property type="project" value="UniProtKB-UniRule"/>
</dbReference>
<dbReference type="GO" id="GO:0004359">
    <property type="term" value="F:glutaminase activity"/>
    <property type="evidence" value="ECO:0007669"/>
    <property type="project" value="InterPro"/>
</dbReference>
<dbReference type="GO" id="GO:0046872">
    <property type="term" value="F:metal ion binding"/>
    <property type="evidence" value="ECO:0007669"/>
    <property type="project" value="UniProtKB-KW"/>
</dbReference>
<dbReference type="GO" id="GO:0003952">
    <property type="term" value="F:NAD+ synthase (glutamine-hydrolyzing) activity"/>
    <property type="evidence" value="ECO:0007669"/>
    <property type="project" value="InterPro"/>
</dbReference>
<dbReference type="GO" id="GO:0008795">
    <property type="term" value="F:NAD+ synthase activity"/>
    <property type="evidence" value="ECO:0007669"/>
    <property type="project" value="UniProtKB-UniRule"/>
</dbReference>
<dbReference type="GO" id="GO:0009435">
    <property type="term" value="P:NAD biosynthetic process"/>
    <property type="evidence" value="ECO:0007669"/>
    <property type="project" value="UniProtKB-UniRule"/>
</dbReference>
<dbReference type="CDD" id="cd00553">
    <property type="entry name" value="NAD_synthase"/>
    <property type="match status" value="1"/>
</dbReference>
<dbReference type="FunFam" id="3.40.50.620:FF:000015">
    <property type="entry name" value="NH(3)-dependent NAD(+) synthetase"/>
    <property type="match status" value="1"/>
</dbReference>
<dbReference type="Gene3D" id="3.40.50.620">
    <property type="entry name" value="HUPs"/>
    <property type="match status" value="1"/>
</dbReference>
<dbReference type="HAMAP" id="MF_00193">
    <property type="entry name" value="NadE_ammonia_dep"/>
    <property type="match status" value="1"/>
</dbReference>
<dbReference type="InterPro" id="IPR022310">
    <property type="entry name" value="NAD/GMP_synthase"/>
</dbReference>
<dbReference type="InterPro" id="IPR003694">
    <property type="entry name" value="NAD_synthase"/>
</dbReference>
<dbReference type="InterPro" id="IPR022926">
    <property type="entry name" value="NH(3)-dep_NAD(+)_synth"/>
</dbReference>
<dbReference type="InterPro" id="IPR014729">
    <property type="entry name" value="Rossmann-like_a/b/a_fold"/>
</dbReference>
<dbReference type="NCBIfam" id="TIGR00552">
    <property type="entry name" value="nadE"/>
    <property type="match status" value="1"/>
</dbReference>
<dbReference type="NCBIfam" id="NF001979">
    <property type="entry name" value="PRK00768.1"/>
    <property type="match status" value="1"/>
</dbReference>
<dbReference type="PANTHER" id="PTHR23090">
    <property type="entry name" value="NH 3 /GLUTAMINE-DEPENDENT NAD + SYNTHETASE"/>
    <property type="match status" value="1"/>
</dbReference>
<dbReference type="PANTHER" id="PTHR23090:SF7">
    <property type="entry name" value="NH(3)-DEPENDENT NAD(+) SYNTHETASE"/>
    <property type="match status" value="1"/>
</dbReference>
<dbReference type="Pfam" id="PF02540">
    <property type="entry name" value="NAD_synthase"/>
    <property type="match status" value="1"/>
</dbReference>
<dbReference type="SUPFAM" id="SSF52402">
    <property type="entry name" value="Adenine nucleotide alpha hydrolases-like"/>
    <property type="match status" value="1"/>
</dbReference>
<reference key="1">
    <citation type="journal article" date="2005" name="J. Bacteriol.">
        <title>Insights on evolution of virulence and resistance from the complete genome analysis of an early methicillin-resistant Staphylococcus aureus strain and a biofilm-producing methicillin-resistant Staphylococcus epidermidis strain.</title>
        <authorList>
            <person name="Gill S.R."/>
            <person name="Fouts D.E."/>
            <person name="Archer G.L."/>
            <person name="Mongodin E.F."/>
            <person name="DeBoy R.T."/>
            <person name="Ravel J."/>
            <person name="Paulsen I.T."/>
            <person name="Kolonay J.F."/>
            <person name="Brinkac L.M."/>
            <person name="Beanan M.J."/>
            <person name="Dodson R.J."/>
            <person name="Daugherty S.C."/>
            <person name="Madupu R."/>
            <person name="Angiuoli S.V."/>
            <person name="Durkin A.S."/>
            <person name="Haft D.H."/>
            <person name="Vamathevan J.J."/>
            <person name="Khouri H."/>
            <person name="Utterback T.R."/>
            <person name="Lee C."/>
            <person name="Dimitrov G."/>
            <person name="Jiang L."/>
            <person name="Qin H."/>
            <person name="Weidman J."/>
            <person name="Tran K."/>
            <person name="Kang K.H."/>
            <person name="Hance I.R."/>
            <person name="Nelson K.E."/>
            <person name="Fraser C.M."/>
        </authorList>
    </citation>
    <scope>NUCLEOTIDE SEQUENCE [LARGE SCALE GENOMIC DNA]</scope>
    <source>
        <strain>ATCC 35984 / DSM 28319 / BCRC 17069 / CCUG 31568 / BM 3577 / RP62A</strain>
    </source>
</reference>
<proteinExistence type="inferred from homology"/>
<feature type="chain" id="PRO_0000152201" description="NH(3)-dependent NAD(+) synthetase">
    <location>
        <begin position="1"/>
        <end position="275"/>
    </location>
</feature>
<feature type="binding site" evidence="1">
    <location>
        <begin position="47"/>
        <end position="54"/>
    </location>
    <ligand>
        <name>ATP</name>
        <dbReference type="ChEBI" id="CHEBI:30616"/>
    </ligand>
</feature>
<feature type="binding site" evidence="1">
    <location>
        <position position="53"/>
    </location>
    <ligand>
        <name>Mg(2+)</name>
        <dbReference type="ChEBI" id="CHEBI:18420"/>
    </ligand>
</feature>
<feature type="binding site" evidence="1">
    <location>
        <position position="139"/>
    </location>
    <ligand>
        <name>deamido-NAD(+)</name>
        <dbReference type="ChEBI" id="CHEBI:58437"/>
    </ligand>
</feature>
<feature type="binding site" evidence="1">
    <location>
        <position position="159"/>
    </location>
    <ligand>
        <name>ATP</name>
        <dbReference type="ChEBI" id="CHEBI:30616"/>
    </ligand>
</feature>
<feature type="binding site" evidence="1">
    <location>
        <position position="164"/>
    </location>
    <ligand>
        <name>Mg(2+)</name>
        <dbReference type="ChEBI" id="CHEBI:18420"/>
    </ligand>
</feature>
<feature type="binding site" evidence="1">
    <location>
        <position position="172"/>
    </location>
    <ligand>
        <name>deamido-NAD(+)</name>
        <dbReference type="ChEBI" id="CHEBI:58437"/>
    </ligand>
</feature>
<feature type="binding site" evidence="1">
    <location>
        <position position="179"/>
    </location>
    <ligand>
        <name>deamido-NAD(+)</name>
        <dbReference type="ChEBI" id="CHEBI:58437"/>
    </ligand>
</feature>
<feature type="binding site" evidence="1">
    <location>
        <position position="188"/>
    </location>
    <ligand>
        <name>ATP</name>
        <dbReference type="ChEBI" id="CHEBI:30616"/>
    </ligand>
</feature>
<feature type="binding site" evidence="1">
    <location>
        <position position="210"/>
    </location>
    <ligand>
        <name>ATP</name>
        <dbReference type="ChEBI" id="CHEBI:30616"/>
    </ligand>
</feature>
<feature type="binding site" evidence="1">
    <location>
        <begin position="259"/>
        <end position="260"/>
    </location>
    <ligand>
        <name>deamido-NAD(+)</name>
        <dbReference type="ChEBI" id="CHEBI:58437"/>
    </ligand>
</feature>